<proteinExistence type="inferred from homology"/>
<evidence type="ECO:0000255" key="1">
    <source>
        <dbReference type="HAMAP-Rule" id="MF_00017"/>
    </source>
</evidence>
<dbReference type="EMBL" id="CP000259">
    <property type="protein sequence ID" value="ABF32393.1"/>
    <property type="molecule type" value="Genomic_DNA"/>
</dbReference>
<dbReference type="RefSeq" id="WP_002983939.1">
    <property type="nucleotide sequence ID" value="NC_008021.1"/>
</dbReference>
<dbReference type="SMR" id="Q1JL26"/>
<dbReference type="GeneID" id="69900624"/>
<dbReference type="KEGG" id="spk:MGAS9429_Spy1206"/>
<dbReference type="HOGENOM" id="CLU_060739_1_0_9"/>
<dbReference type="Proteomes" id="UP000002433">
    <property type="component" value="Chromosome"/>
</dbReference>
<dbReference type="GO" id="GO:0003677">
    <property type="term" value="F:DNA binding"/>
    <property type="evidence" value="ECO:0007669"/>
    <property type="project" value="UniProtKB-UniRule"/>
</dbReference>
<dbReference type="GO" id="GO:0008270">
    <property type="term" value="F:zinc ion binding"/>
    <property type="evidence" value="ECO:0007669"/>
    <property type="project" value="UniProtKB-KW"/>
</dbReference>
<dbReference type="GO" id="GO:0006310">
    <property type="term" value="P:DNA recombination"/>
    <property type="evidence" value="ECO:0007669"/>
    <property type="project" value="UniProtKB-UniRule"/>
</dbReference>
<dbReference type="GO" id="GO:0006281">
    <property type="term" value="P:DNA repair"/>
    <property type="evidence" value="ECO:0007669"/>
    <property type="project" value="UniProtKB-UniRule"/>
</dbReference>
<dbReference type="CDD" id="cd01025">
    <property type="entry name" value="TOPRIM_recR"/>
    <property type="match status" value="1"/>
</dbReference>
<dbReference type="Gene3D" id="3.30.60.80">
    <property type="match status" value="1"/>
</dbReference>
<dbReference type="Gene3D" id="3.40.1360.10">
    <property type="match status" value="1"/>
</dbReference>
<dbReference type="Gene3D" id="6.10.250.240">
    <property type="match status" value="1"/>
</dbReference>
<dbReference type="Gene3D" id="1.10.8.420">
    <property type="entry name" value="RecR Domain 1"/>
    <property type="match status" value="1"/>
</dbReference>
<dbReference type="HAMAP" id="MF_00017">
    <property type="entry name" value="RecR"/>
    <property type="match status" value="1"/>
</dbReference>
<dbReference type="InterPro" id="IPR000093">
    <property type="entry name" value="DNA_Rcmb_RecR"/>
</dbReference>
<dbReference type="InterPro" id="IPR023627">
    <property type="entry name" value="Rcmb_RecR"/>
</dbReference>
<dbReference type="InterPro" id="IPR015967">
    <property type="entry name" value="Rcmb_RecR_Znf"/>
</dbReference>
<dbReference type="InterPro" id="IPR006171">
    <property type="entry name" value="TOPRIM_dom"/>
</dbReference>
<dbReference type="InterPro" id="IPR034137">
    <property type="entry name" value="TOPRIM_RecR"/>
</dbReference>
<dbReference type="NCBIfam" id="TIGR00615">
    <property type="entry name" value="recR"/>
    <property type="match status" value="1"/>
</dbReference>
<dbReference type="PANTHER" id="PTHR30446">
    <property type="entry name" value="RECOMBINATION PROTEIN RECR"/>
    <property type="match status" value="1"/>
</dbReference>
<dbReference type="PANTHER" id="PTHR30446:SF0">
    <property type="entry name" value="RECOMBINATION PROTEIN RECR"/>
    <property type="match status" value="1"/>
</dbReference>
<dbReference type="Pfam" id="PF21175">
    <property type="entry name" value="RecR_C"/>
    <property type="match status" value="1"/>
</dbReference>
<dbReference type="Pfam" id="PF21176">
    <property type="entry name" value="RecR_HhH"/>
    <property type="match status" value="1"/>
</dbReference>
<dbReference type="Pfam" id="PF02132">
    <property type="entry name" value="RecR_ZnF"/>
    <property type="match status" value="1"/>
</dbReference>
<dbReference type="Pfam" id="PF13662">
    <property type="entry name" value="Toprim_4"/>
    <property type="match status" value="1"/>
</dbReference>
<dbReference type="SMART" id="SM00493">
    <property type="entry name" value="TOPRIM"/>
    <property type="match status" value="1"/>
</dbReference>
<dbReference type="SUPFAM" id="SSF111304">
    <property type="entry name" value="Recombination protein RecR"/>
    <property type="match status" value="1"/>
</dbReference>
<dbReference type="PROSITE" id="PS01300">
    <property type="entry name" value="RECR"/>
    <property type="match status" value="1"/>
</dbReference>
<dbReference type="PROSITE" id="PS50880">
    <property type="entry name" value="TOPRIM"/>
    <property type="match status" value="1"/>
</dbReference>
<protein>
    <recommendedName>
        <fullName evidence="1">Recombination protein RecR</fullName>
    </recommendedName>
</protein>
<name>RECR_STRPC</name>
<sequence length="198" mass="21645">MLYPTPIAKLIDSYSKLPGIGIKTATRLAFYTIGMSNEDVNDFAKNLLAAKRELTYCSICGNLTDDDPCHICTDTSRDQTTILVVEDAKDVSAMEKIQEYHGYYHVLHGLISPMNGVGPDDINLKSLITRLMDGKVSEVIVATNATADGEATSMYISRVLKPAGIKVTRLARGLAVGSDIEYADEVTLLRAIENRTEL</sequence>
<comment type="function">
    <text evidence="1">May play a role in DNA repair. It seems to be involved in an RecBC-independent recombinational process of DNA repair. It may act with RecF and RecO.</text>
</comment>
<comment type="similarity">
    <text evidence="1">Belongs to the RecR family.</text>
</comment>
<reference key="1">
    <citation type="journal article" date="2006" name="Proc. Natl. Acad. Sci. U.S.A.">
        <title>Molecular genetic anatomy of inter- and intraserotype variation in the human bacterial pathogen group A Streptococcus.</title>
        <authorList>
            <person name="Beres S.B."/>
            <person name="Richter E.W."/>
            <person name="Nagiec M.J."/>
            <person name="Sumby P."/>
            <person name="Porcella S.F."/>
            <person name="DeLeo F.R."/>
            <person name="Musser J.M."/>
        </authorList>
    </citation>
    <scope>NUCLEOTIDE SEQUENCE [LARGE SCALE GENOMIC DNA]</scope>
    <source>
        <strain>MGAS9429</strain>
    </source>
</reference>
<organism>
    <name type="scientific">Streptococcus pyogenes serotype M12 (strain MGAS9429)</name>
    <dbReference type="NCBI Taxonomy" id="370551"/>
    <lineage>
        <taxon>Bacteria</taxon>
        <taxon>Bacillati</taxon>
        <taxon>Bacillota</taxon>
        <taxon>Bacilli</taxon>
        <taxon>Lactobacillales</taxon>
        <taxon>Streptococcaceae</taxon>
        <taxon>Streptococcus</taxon>
    </lineage>
</organism>
<keyword id="KW-0227">DNA damage</keyword>
<keyword id="KW-0233">DNA recombination</keyword>
<keyword id="KW-0234">DNA repair</keyword>
<keyword id="KW-0479">Metal-binding</keyword>
<keyword id="KW-0862">Zinc</keyword>
<keyword id="KW-0863">Zinc-finger</keyword>
<accession>Q1JL26</accession>
<gene>
    <name evidence="1" type="primary">recR</name>
    <name type="ordered locus">MGAS9429_Spy1206</name>
</gene>
<feature type="chain" id="PRO_1000001627" description="Recombination protein RecR">
    <location>
        <begin position="1"/>
        <end position="198"/>
    </location>
</feature>
<feature type="domain" description="Toprim" evidence="1">
    <location>
        <begin position="80"/>
        <end position="175"/>
    </location>
</feature>
<feature type="zinc finger region" description="C4-type" evidence="1">
    <location>
        <begin position="57"/>
        <end position="72"/>
    </location>
</feature>